<reference key="1">
    <citation type="journal article" date="2012" name="Stand. Genomic Sci.">
        <title>Complete genome sequence of Polynucleobacter necessarius subsp. asymbioticus type strain (QLW-P1DMWA-1(T)).</title>
        <authorList>
            <person name="Meincke L."/>
            <person name="Copeland A."/>
            <person name="Lapidus A."/>
            <person name="Lucas S."/>
            <person name="Berry K.W."/>
            <person name="Del Rio T.G."/>
            <person name="Hammon N."/>
            <person name="Dalin E."/>
            <person name="Tice H."/>
            <person name="Pitluck S."/>
            <person name="Richardson P."/>
            <person name="Bruce D."/>
            <person name="Goodwin L."/>
            <person name="Han C."/>
            <person name="Tapia R."/>
            <person name="Detter J.C."/>
            <person name="Schmutz J."/>
            <person name="Brettin T."/>
            <person name="Larimer F."/>
            <person name="Land M."/>
            <person name="Hauser L."/>
            <person name="Kyrpides N.C."/>
            <person name="Ivanova N."/>
            <person name="Goker M."/>
            <person name="Woyke T."/>
            <person name="Wu Q.L."/>
            <person name="Pockl M."/>
            <person name="Hahn M.W."/>
            <person name="Klenk H.P."/>
        </authorList>
    </citation>
    <scope>NUCLEOTIDE SEQUENCE [LARGE SCALE GENOMIC DNA]</scope>
    <source>
        <strain>DSM 18221 / CIP 109841 / QLW-P1DMWA-1</strain>
    </source>
</reference>
<organism>
    <name type="scientific">Polynucleobacter asymbioticus (strain DSM 18221 / CIP 109841 / QLW-P1DMWA-1)</name>
    <name type="common">Polynucleobacter necessarius subsp. asymbioticus</name>
    <dbReference type="NCBI Taxonomy" id="312153"/>
    <lineage>
        <taxon>Bacteria</taxon>
        <taxon>Pseudomonadati</taxon>
        <taxon>Pseudomonadota</taxon>
        <taxon>Betaproteobacteria</taxon>
        <taxon>Burkholderiales</taxon>
        <taxon>Burkholderiaceae</taxon>
        <taxon>Polynucleobacter</taxon>
    </lineage>
</organism>
<gene>
    <name evidence="1" type="primary">gltX</name>
    <name type="ordered locus">Pnuc_0950</name>
</gene>
<name>SYE_POLAQ</name>
<sequence length="468" mass="52321">MAIMHIRTRFAPSPTGFIHLGNLRSALYPWAFARHNKGDFILRIEDTDLERSSQEAVDVIIEGMAWLGMDIDEGPIYQMQRIDRYRAVIKEMVEAGLAYPCYMSEDELNKLRDQQMANKEKPRYNGLWRPEPGKDLPPIPEGVLPVIRFKNPIGGSVIWNDAVKGQIEISNDELDDLVIARPDGTPTYNFCVVVDDLDMKITHVIRGDDHVNNTPRQINIMKALGGSPPVYAHLPTVLNDLGEKMSKRNGAMSVRDYQKAGYLPDAILNYLARLGWSHGDAEVFTKEQFVDWFELDSLGRSPAQHNPEKLLWLNHQYIQNADAAKLAEACKPFAHQLGIDTENGPNFIQVVGLLKDRANTLIEIAEGAKLFYATAPNLTKDQITENISEAIVPALKDLIEALKNADGTKESYSAAFKQVLAQHQIKMPALAMPVRYALFATTQTPAIDAVLVVLGKEEAINRLSKVVV</sequence>
<dbReference type="EC" id="6.1.1.17" evidence="1"/>
<dbReference type="EMBL" id="CP000655">
    <property type="protein sequence ID" value="ABP34166.1"/>
    <property type="molecule type" value="Genomic_DNA"/>
</dbReference>
<dbReference type="RefSeq" id="WP_011902791.1">
    <property type="nucleotide sequence ID" value="NC_009379.1"/>
</dbReference>
<dbReference type="SMR" id="A4SXF2"/>
<dbReference type="GeneID" id="31481318"/>
<dbReference type="KEGG" id="pnu:Pnuc_0950"/>
<dbReference type="eggNOG" id="COG0008">
    <property type="taxonomic scope" value="Bacteria"/>
</dbReference>
<dbReference type="HOGENOM" id="CLU_015768_6_0_4"/>
<dbReference type="Proteomes" id="UP000000231">
    <property type="component" value="Chromosome"/>
</dbReference>
<dbReference type="GO" id="GO:0005829">
    <property type="term" value="C:cytosol"/>
    <property type="evidence" value="ECO:0007669"/>
    <property type="project" value="TreeGrafter"/>
</dbReference>
<dbReference type="GO" id="GO:0005524">
    <property type="term" value="F:ATP binding"/>
    <property type="evidence" value="ECO:0007669"/>
    <property type="project" value="UniProtKB-UniRule"/>
</dbReference>
<dbReference type="GO" id="GO:0004818">
    <property type="term" value="F:glutamate-tRNA ligase activity"/>
    <property type="evidence" value="ECO:0007669"/>
    <property type="project" value="UniProtKB-UniRule"/>
</dbReference>
<dbReference type="GO" id="GO:0000049">
    <property type="term" value="F:tRNA binding"/>
    <property type="evidence" value="ECO:0007669"/>
    <property type="project" value="InterPro"/>
</dbReference>
<dbReference type="GO" id="GO:0008270">
    <property type="term" value="F:zinc ion binding"/>
    <property type="evidence" value="ECO:0007669"/>
    <property type="project" value="InterPro"/>
</dbReference>
<dbReference type="GO" id="GO:0006424">
    <property type="term" value="P:glutamyl-tRNA aminoacylation"/>
    <property type="evidence" value="ECO:0007669"/>
    <property type="project" value="UniProtKB-UniRule"/>
</dbReference>
<dbReference type="CDD" id="cd00808">
    <property type="entry name" value="GluRS_core"/>
    <property type="match status" value="1"/>
</dbReference>
<dbReference type="FunFam" id="3.40.50.620:FF:000007">
    <property type="entry name" value="Glutamate--tRNA ligase"/>
    <property type="match status" value="1"/>
</dbReference>
<dbReference type="Gene3D" id="1.10.10.350">
    <property type="match status" value="1"/>
</dbReference>
<dbReference type="Gene3D" id="1.10.8.70">
    <property type="entry name" value="Glutamate-tRNA synthetase, class I, anticodon-binding domain 1"/>
    <property type="match status" value="1"/>
</dbReference>
<dbReference type="Gene3D" id="3.40.50.620">
    <property type="entry name" value="HUPs"/>
    <property type="match status" value="1"/>
</dbReference>
<dbReference type="HAMAP" id="MF_00022">
    <property type="entry name" value="Glu_tRNA_synth_type1"/>
    <property type="match status" value="1"/>
</dbReference>
<dbReference type="InterPro" id="IPR045462">
    <property type="entry name" value="aa-tRNA-synth_I_cd-bd"/>
</dbReference>
<dbReference type="InterPro" id="IPR020751">
    <property type="entry name" value="aa-tRNA-synth_I_codon-bd_sub2"/>
</dbReference>
<dbReference type="InterPro" id="IPR001412">
    <property type="entry name" value="aa-tRNA-synth_I_CS"/>
</dbReference>
<dbReference type="InterPro" id="IPR008925">
    <property type="entry name" value="aa_tRNA-synth_I_cd-bd_sf"/>
</dbReference>
<dbReference type="InterPro" id="IPR004527">
    <property type="entry name" value="Glu-tRNA-ligase_bac/mito"/>
</dbReference>
<dbReference type="InterPro" id="IPR020752">
    <property type="entry name" value="Glu-tRNA-synth_I_codon-bd_sub1"/>
</dbReference>
<dbReference type="InterPro" id="IPR000924">
    <property type="entry name" value="Glu/Gln-tRNA-synth"/>
</dbReference>
<dbReference type="InterPro" id="IPR020058">
    <property type="entry name" value="Glu/Gln-tRNA-synth_Ib_cat-dom"/>
</dbReference>
<dbReference type="InterPro" id="IPR049940">
    <property type="entry name" value="GluQ/Sye"/>
</dbReference>
<dbReference type="InterPro" id="IPR033910">
    <property type="entry name" value="GluRS_core"/>
</dbReference>
<dbReference type="InterPro" id="IPR014729">
    <property type="entry name" value="Rossmann-like_a/b/a_fold"/>
</dbReference>
<dbReference type="NCBIfam" id="TIGR00464">
    <property type="entry name" value="gltX_bact"/>
    <property type="match status" value="1"/>
</dbReference>
<dbReference type="PANTHER" id="PTHR43311">
    <property type="entry name" value="GLUTAMATE--TRNA LIGASE"/>
    <property type="match status" value="1"/>
</dbReference>
<dbReference type="PANTHER" id="PTHR43311:SF2">
    <property type="entry name" value="GLUTAMATE--TRNA LIGASE, MITOCHONDRIAL-RELATED"/>
    <property type="match status" value="1"/>
</dbReference>
<dbReference type="Pfam" id="PF19269">
    <property type="entry name" value="Anticodon_2"/>
    <property type="match status" value="1"/>
</dbReference>
<dbReference type="Pfam" id="PF00749">
    <property type="entry name" value="tRNA-synt_1c"/>
    <property type="match status" value="1"/>
</dbReference>
<dbReference type="PRINTS" id="PR00987">
    <property type="entry name" value="TRNASYNTHGLU"/>
</dbReference>
<dbReference type="SUPFAM" id="SSF48163">
    <property type="entry name" value="An anticodon-binding domain of class I aminoacyl-tRNA synthetases"/>
    <property type="match status" value="1"/>
</dbReference>
<dbReference type="SUPFAM" id="SSF52374">
    <property type="entry name" value="Nucleotidylyl transferase"/>
    <property type="match status" value="1"/>
</dbReference>
<dbReference type="PROSITE" id="PS00178">
    <property type="entry name" value="AA_TRNA_LIGASE_I"/>
    <property type="match status" value="1"/>
</dbReference>
<comment type="function">
    <text evidence="1">Catalyzes the attachment of glutamate to tRNA(Glu) in a two-step reaction: glutamate is first activated by ATP to form Glu-AMP and then transferred to the acceptor end of tRNA(Glu).</text>
</comment>
<comment type="catalytic activity">
    <reaction evidence="1">
        <text>tRNA(Glu) + L-glutamate + ATP = L-glutamyl-tRNA(Glu) + AMP + diphosphate</text>
        <dbReference type="Rhea" id="RHEA:23540"/>
        <dbReference type="Rhea" id="RHEA-COMP:9663"/>
        <dbReference type="Rhea" id="RHEA-COMP:9680"/>
        <dbReference type="ChEBI" id="CHEBI:29985"/>
        <dbReference type="ChEBI" id="CHEBI:30616"/>
        <dbReference type="ChEBI" id="CHEBI:33019"/>
        <dbReference type="ChEBI" id="CHEBI:78442"/>
        <dbReference type="ChEBI" id="CHEBI:78520"/>
        <dbReference type="ChEBI" id="CHEBI:456215"/>
        <dbReference type="EC" id="6.1.1.17"/>
    </reaction>
</comment>
<comment type="subunit">
    <text evidence="1">Monomer.</text>
</comment>
<comment type="subcellular location">
    <subcellularLocation>
        <location evidence="1">Cytoplasm</location>
    </subcellularLocation>
</comment>
<comment type="similarity">
    <text evidence="1">Belongs to the class-I aminoacyl-tRNA synthetase family. Glutamate--tRNA ligase type 1 subfamily.</text>
</comment>
<protein>
    <recommendedName>
        <fullName evidence="1">Glutamate--tRNA ligase</fullName>
        <ecNumber evidence="1">6.1.1.17</ecNumber>
    </recommendedName>
    <alternativeName>
        <fullName evidence="1">Glutamyl-tRNA synthetase</fullName>
        <shortName evidence="1">GluRS</shortName>
    </alternativeName>
</protein>
<evidence type="ECO:0000255" key="1">
    <source>
        <dbReference type="HAMAP-Rule" id="MF_00022"/>
    </source>
</evidence>
<feature type="chain" id="PRO_0000330988" description="Glutamate--tRNA ligase">
    <location>
        <begin position="1"/>
        <end position="468"/>
    </location>
</feature>
<feature type="short sequence motif" description="'HIGH' region" evidence="1">
    <location>
        <begin position="12"/>
        <end position="22"/>
    </location>
</feature>
<feature type="short sequence motif" description="'KMSKS' region" evidence="1">
    <location>
        <begin position="244"/>
        <end position="248"/>
    </location>
</feature>
<feature type="binding site" evidence="1">
    <location>
        <position position="247"/>
    </location>
    <ligand>
        <name>ATP</name>
        <dbReference type="ChEBI" id="CHEBI:30616"/>
    </ligand>
</feature>
<accession>A4SXF2</accession>
<proteinExistence type="inferred from homology"/>
<keyword id="KW-0030">Aminoacyl-tRNA synthetase</keyword>
<keyword id="KW-0067">ATP-binding</keyword>
<keyword id="KW-0963">Cytoplasm</keyword>
<keyword id="KW-0436">Ligase</keyword>
<keyword id="KW-0547">Nucleotide-binding</keyword>
<keyword id="KW-0648">Protein biosynthesis</keyword>
<keyword id="KW-1185">Reference proteome</keyword>